<comment type="function">
    <text evidence="1 2 5 7 8 11">Member of the two-component regulatory system EnvZ/OmpR involved in osmoregulation (particularly of genes ompF and ompC) as well as other genes (By similarity). Plays a central role in both acid and osmotic stress responses. Binds AT-rich DNA (By similarity). Binds to the promoter of both ompC and ompF; at low osmolarity it activates ompF transcription, while at high osmolarity it represses ompF and activates ompC transcription (By similarity). Directly activates the transcription of SsrA (PubMed:31033442). Binds to the promoter of sseI/srfH (PubMed:15491370). Required for the early transcription of virulence genes (PubMed:10633113, PubMed:16304611).</text>
</comment>
<comment type="subunit">
    <text evidence="2">Monomer and multimer.</text>
</comment>
<comment type="subcellular location">
    <subcellularLocation>
        <location evidence="2">Cytoplasm</location>
    </subcellularLocation>
</comment>
<comment type="PTM">
    <text evidence="2">Phosphorylated by EnvZ; this stimulates its DNA-binding ability. Asp-55 is the primary phosphate acceptor site.</text>
</comment>
<comment type="disruption phenotype">
    <text evidence="5 6 7 8 9 10 11">Abnormal regulation of expression of genes involved in virulence in inducing conditions and in host cells (PubMed:10633113, PubMed:12949164, PubMed:15491370, PubMed:16304611, PubMed:19229334, PubMed:19858298, PubMed:31033442). Abolishes replication within macrophages (PubMed:10633113). Double knockout with envZ decreases virulence in mouse (PubMed:19229334).</text>
</comment>
<reference key="1">
    <citation type="journal article" date="1988" name="J. Mol. Biol.">
        <title>Structure and expression of the ompB operon, the regulatory locus for the outer membrane porin regulon in Salmonella typhimurium LT-2.</title>
        <authorList>
            <person name="Lijestroem P."/>
            <person name="Laamanen I."/>
            <person name="Palva E.T."/>
        </authorList>
    </citation>
    <scope>NUCLEOTIDE SEQUENCE [GENOMIC DNA]</scope>
    <source>
        <strain>LT2</strain>
    </source>
</reference>
<reference key="2">
    <citation type="journal article" date="2001" name="Nature">
        <title>Complete genome sequence of Salmonella enterica serovar Typhimurium LT2.</title>
        <authorList>
            <person name="McClelland M."/>
            <person name="Sanderson K.E."/>
            <person name="Spieth J."/>
            <person name="Clifton S.W."/>
            <person name="Latreille P."/>
            <person name="Courtney L."/>
            <person name="Porwollik S."/>
            <person name="Ali J."/>
            <person name="Dante M."/>
            <person name="Du F."/>
            <person name="Hou S."/>
            <person name="Layman D."/>
            <person name="Leonard S."/>
            <person name="Nguyen C."/>
            <person name="Scott K."/>
            <person name="Holmes A."/>
            <person name="Grewal N."/>
            <person name="Mulvaney E."/>
            <person name="Ryan E."/>
            <person name="Sun H."/>
            <person name="Florea L."/>
            <person name="Miller W."/>
            <person name="Stoneking T."/>
            <person name="Nhan M."/>
            <person name="Waterston R."/>
            <person name="Wilson R.K."/>
        </authorList>
    </citation>
    <scope>NUCLEOTIDE SEQUENCE [LARGE SCALE GENOMIC DNA]</scope>
    <source>
        <strain>LT2 / SGSC1412 / ATCC 700720</strain>
    </source>
</reference>
<reference key="3">
    <citation type="journal article" date="2000" name="J. Bacteriol.">
        <title>OmpR regulates the two-component system SsrA-ssrB in Salmonella pathogenicity island 2.</title>
        <authorList>
            <person name="Lee A.K."/>
            <person name="Detweiler C.S."/>
            <person name="Falkow S."/>
        </authorList>
    </citation>
    <scope>FUNCTION</scope>
    <scope>DISRUPTION PHENOTYPE</scope>
    <source>
        <strain evidence="12">SL1344</strain>
    </source>
</reference>
<reference evidence="19" key="4">
    <citation type="journal article" date="2003" name="Microbiology">
        <title>The roles of SsrA-SsrB and OmpR-EnvZ in the regulation of genes encoding the Salmonella typhimurium SPI-2 type III secretion system.</title>
        <authorList>
            <person name="Garmendia J."/>
            <person name="Beuzon C.R."/>
            <person name="Ruiz-Albert J."/>
            <person name="Holden D.W."/>
        </authorList>
    </citation>
    <scope>DISRUPTION PHENOTYPE</scope>
    <source>
        <strain evidence="13">ATCC 14028 / SGSC 2980 / CDC 6516-60 / NCTC 12023</strain>
    </source>
</reference>
<reference key="5">
    <citation type="journal article" date="2004" name="Mol. Microbiol.">
        <title>The response regulator SsrB activates transcription and binds to a region overlapping OmpR binding sites at Salmonella pathogenicity island 2.</title>
        <authorList>
            <person name="Feng X."/>
            <person name="Walthers D."/>
            <person name="Oropeza R."/>
            <person name="Kenney L.J."/>
        </authorList>
    </citation>
    <scope>FUNCTION</scope>
    <scope>DISRUPTION PHENOTYPE</scope>
    <source>
        <strain evidence="14">14028s / SGSC 2262</strain>
    </source>
</reference>
<reference key="6">
    <citation type="journal article" date="2005" name="PLoS Pathog.">
        <title>Salmonella pathogenicity island 2 is expressed prior to penetrating the intestine.</title>
        <authorList>
            <person name="Brown N.F."/>
            <person name="Vallance B.A."/>
            <person name="Coombes B.K."/>
            <person name="Valdez Y."/>
            <person name="Coburn B.A."/>
            <person name="Finlay B.B."/>
        </authorList>
    </citation>
    <scope>FUNCTION</scope>
    <scope>DISRUPTION PHENOTYPE</scope>
    <source>
        <strain evidence="15">SL1344</strain>
    </source>
</reference>
<reference key="7">
    <citation type="journal article" date="2009" name="PLoS Pathog.">
        <title>Coordinated regulation of virulence during systemic infection of Salmonella enterica serovar Typhimurium.</title>
        <authorList>
            <person name="Yoon H."/>
            <person name="McDermott J.E."/>
            <person name="Porwollik S."/>
            <person name="McClelland M."/>
            <person name="Heffron F."/>
        </authorList>
    </citation>
    <scope>DISRUPTION PHENOTYPE</scope>
    <source>
        <strain evidence="16">14028s / SGSC 2262</strain>
    </source>
</reference>
<reference key="8">
    <citation type="journal article" date="2010" name="Infect. Immun.">
        <title>Systematic analysis of the SsrAB virulon of Salmonella enterica.</title>
        <authorList>
            <person name="Xu X."/>
            <person name="Hensel M."/>
        </authorList>
    </citation>
    <scope>DISRUPTION PHENOTYPE</scope>
    <source>
        <strain evidence="17">ATCC 14028 / SGSC 2980 / CDC 6516-60 / NCTC 12023</strain>
    </source>
</reference>
<reference key="9">
    <citation type="journal article" date="2019" name="Elife">
        <title>Single cell, super-resolution imaging reveals an acid pH-dependent conformational switch in SsrB regulates SPI-2.</title>
        <authorList>
            <person name="Liew A.T.F."/>
            <person name="Foo Y.H."/>
            <person name="Gao Y."/>
            <person name="Zangoui P."/>
            <person name="Singh M.K."/>
            <person name="Gulvady R."/>
            <person name="Kenney L.J."/>
        </authorList>
    </citation>
    <scope>FUNCTION</scope>
    <scope>DISRUPTION PHENOTYPE</scope>
    <source>
        <strain evidence="18">14028s / SGSC 2262</strain>
    </source>
</reference>
<evidence type="ECO:0000250" key="1">
    <source>
        <dbReference type="UniProtKB" id="A0A0H3NGY1"/>
    </source>
</evidence>
<evidence type="ECO:0000250" key="2">
    <source>
        <dbReference type="UniProtKB" id="P0AA16"/>
    </source>
</evidence>
<evidence type="ECO:0000255" key="3">
    <source>
        <dbReference type="PROSITE-ProRule" id="PRU00169"/>
    </source>
</evidence>
<evidence type="ECO:0000255" key="4">
    <source>
        <dbReference type="PROSITE-ProRule" id="PRU01091"/>
    </source>
</evidence>
<evidence type="ECO:0000269" key="5">
    <source>
    </source>
</evidence>
<evidence type="ECO:0000269" key="6">
    <source>
    </source>
</evidence>
<evidence type="ECO:0000269" key="7">
    <source>
    </source>
</evidence>
<evidence type="ECO:0000269" key="8">
    <source>
    </source>
</evidence>
<evidence type="ECO:0000269" key="9">
    <source>
    </source>
</evidence>
<evidence type="ECO:0000269" key="10">
    <source>
    </source>
</evidence>
<evidence type="ECO:0000269" key="11">
    <source>
    </source>
</evidence>
<evidence type="ECO:0000303" key="12">
    <source>
    </source>
</evidence>
<evidence type="ECO:0000303" key="13">
    <source>
    </source>
</evidence>
<evidence type="ECO:0000303" key="14">
    <source>
    </source>
</evidence>
<evidence type="ECO:0000303" key="15">
    <source>
    </source>
</evidence>
<evidence type="ECO:0000303" key="16">
    <source>
    </source>
</evidence>
<evidence type="ECO:0000303" key="17">
    <source>
    </source>
</evidence>
<evidence type="ECO:0000303" key="18">
    <source>
    </source>
</evidence>
<evidence type="ECO:0000305" key="19"/>
<accession>P0AA19</accession>
<accession>O31133</accession>
<accession>P03025</accession>
<accession>P08981</accession>
<accession>P41405</accession>
<feature type="chain" id="PRO_0000081180" description="DNA-binding dual transcriptional regulator OmpR">
    <location>
        <begin position="1"/>
        <end position="239"/>
    </location>
</feature>
<feature type="domain" description="Response regulatory" evidence="3">
    <location>
        <begin position="6"/>
        <end position="120"/>
    </location>
</feature>
<feature type="DNA-binding region" description="OmpR/PhoB-type" evidence="4">
    <location>
        <begin position="135"/>
        <end position="234"/>
    </location>
</feature>
<feature type="modified residue" description="4-aspartylphosphate" evidence="2 3">
    <location>
        <position position="55"/>
    </location>
</feature>
<feature type="sequence conflict" description="In Ref. 1; CAA30934." evidence="19" ref="1">
    <original>A</original>
    <variation>P</variation>
    <location>
        <position position="118"/>
    </location>
</feature>
<sequence length="239" mass="27354">MQENYKILVVDDDMRLRALLERYLTEQGFQVRSVANAEQMDRLLTRESFHLMVLDLMLPGEDGLSICRRLRSQSNPMPIIMVTAKGEEVDRIVGLEIGADDYIPKPFNPRELLARIRAVLRRQANELPGAPSQEEAVIAFGKFKLNLGTREMFREDEPMPLTSGEFAVLKALVSHPREPLSRDKLMNLARGREYSAMERSIDVQISRLRRMVEEDPAHPRYIQTVWGLGYVFVPDGSKA</sequence>
<name>OMPR_SALTY</name>
<proteinExistence type="inferred from homology"/>
<organism>
    <name type="scientific">Salmonella typhimurium (strain LT2 / SGSC1412 / ATCC 700720)</name>
    <dbReference type="NCBI Taxonomy" id="99287"/>
    <lineage>
        <taxon>Bacteria</taxon>
        <taxon>Pseudomonadati</taxon>
        <taxon>Pseudomonadota</taxon>
        <taxon>Gammaproteobacteria</taxon>
        <taxon>Enterobacterales</taxon>
        <taxon>Enterobacteriaceae</taxon>
        <taxon>Salmonella</taxon>
    </lineage>
</organism>
<gene>
    <name type="primary">ompR</name>
    <name type="ordered locus">STM3502</name>
</gene>
<keyword id="KW-0010">Activator</keyword>
<keyword id="KW-0963">Cytoplasm</keyword>
<keyword id="KW-0238">DNA-binding</keyword>
<keyword id="KW-0597">Phosphoprotein</keyword>
<keyword id="KW-1185">Reference proteome</keyword>
<keyword id="KW-0678">Repressor</keyword>
<keyword id="KW-0346">Stress response</keyword>
<keyword id="KW-0804">Transcription</keyword>
<keyword id="KW-0805">Transcription regulation</keyword>
<keyword id="KW-0902">Two-component regulatory system</keyword>
<dbReference type="EMBL" id="X12374">
    <property type="protein sequence ID" value="CAA30934.1"/>
    <property type="molecule type" value="Genomic_DNA"/>
</dbReference>
<dbReference type="EMBL" id="AE006468">
    <property type="protein sequence ID" value="AAL22364.1"/>
    <property type="molecule type" value="Genomic_DNA"/>
</dbReference>
<dbReference type="PIR" id="S01366">
    <property type="entry name" value="S01366"/>
</dbReference>
<dbReference type="RefSeq" id="NP_462405.1">
    <property type="nucleotide sequence ID" value="NC_003197.2"/>
</dbReference>
<dbReference type="RefSeq" id="WP_001157751.1">
    <property type="nucleotide sequence ID" value="NC_003197.2"/>
</dbReference>
<dbReference type="SMR" id="P0AA19"/>
<dbReference type="STRING" id="99287.STM3502"/>
<dbReference type="PaxDb" id="99287-STM3502"/>
<dbReference type="GeneID" id="1255025"/>
<dbReference type="GeneID" id="98390506"/>
<dbReference type="KEGG" id="stm:STM3502"/>
<dbReference type="PATRIC" id="fig|99287.12.peg.3701"/>
<dbReference type="HOGENOM" id="CLU_000445_30_4_6"/>
<dbReference type="OMA" id="HSGFDVQ"/>
<dbReference type="PhylomeDB" id="P0AA19"/>
<dbReference type="BioCyc" id="SENT99287:STM3502-MONOMER"/>
<dbReference type="PHI-base" id="PHI:2685"/>
<dbReference type="PRO" id="PR:P0AA19"/>
<dbReference type="Proteomes" id="UP000001014">
    <property type="component" value="Chromosome"/>
</dbReference>
<dbReference type="GO" id="GO:0005829">
    <property type="term" value="C:cytosol"/>
    <property type="evidence" value="ECO:0000318"/>
    <property type="project" value="GO_Central"/>
</dbReference>
<dbReference type="GO" id="GO:0032993">
    <property type="term" value="C:protein-DNA complex"/>
    <property type="evidence" value="ECO:0000318"/>
    <property type="project" value="GO_Central"/>
</dbReference>
<dbReference type="GO" id="GO:0001216">
    <property type="term" value="F:DNA-binding transcription activator activity"/>
    <property type="evidence" value="ECO:0000314"/>
    <property type="project" value="UniProtKB"/>
</dbReference>
<dbReference type="GO" id="GO:0000156">
    <property type="term" value="F:phosphorelay response regulator activity"/>
    <property type="evidence" value="ECO:0000318"/>
    <property type="project" value="GO_Central"/>
</dbReference>
<dbReference type="GO" id="GO:0000976">
    <property type="term" value="F:transcription cis-regulatory region binding"/>
    <property type="evidence" value="ECO:0000314"/>
    <property type="project" value="UniProtKB"/>
</dbReference>
<dbReference type="GO" id="GO:0051701">
    <property type="term" value="P:biological process involved in interaction with host"/>
    <property type="evidence" value="ECO:0000315"/>
    <property type="project" value="UniProtKB"/>
</dbReference>
<dbReference type="GO" id="GO:0045893">
    <property type="term" value="P:positive regulation of DNA-templated transcription"/>
    <property type="evidence" value="ECO:0000315"/>
    <property type="project" value="UniProtKB"/>
</dbReference>
<dbReference type="GO" id="GO:0006355">
    <property type="term" value="P:regulation of DNA-templated transcription"/>
    <property type="evidence" value="ECO:0000318"/>
    <property type="project" value="GO_Central"/>
</dbReference>
<dbReference type="CDD" id="cd00383">
    <property type="entry name" value="trans_reg_C"/>
    <property type="match status" value="1"/>
</dbReference>
<dbReference type="FunFam" id="1.10.10.10:FF:000023">
    <property type="entry name" value="Two-component response regulator OmpR"/>
    <property type="match status" value="1"/>
</dbReference>
<dbReference type="FunFam" id="3.40.50.2300:FF:000008">
    <property type="entry name" value="Two-component response regulator OmpR"/>
    <property type="match status" value="1"/>
</dbReference>
<dbReference type="Gene3D" id="3.40.50.2300">
    <property type="match status" value="1"/>
</dbReference>
<dbReference type="Gene3D" id="6.10.250.690">
    <property type="match status" value="1"/>
</dbReference>
<dbReference type="Gene3D" id="1.10.10.10">
    <property type="entry name" value="Winged helix-like DNA-binding domain superfamily/Winged helix DNA-binding domain"/>
    <property type="match status" value="1"/>
</dbReference>
<dbReference type="InterPro" id="IPR011006">
    <property type="entry name" value="CheY-like_superfamily"/>
</dbReference>
<dbReference type="InterPro" id="IPR001867">
    <property type="entry name" value="OmpR/PhoB-type_DNA-bd"/>
</dbReference>
<dbReference type="InterPro" id="IPR016032">
    <property type="entry name" value="Sig_transdc_resp-reg_C-effctor"/>
</dbReference>
<dbReference type="InterPro" id="IPR001789">
    <property type="entry name" value="Sig_transdc_resp-reg_receiver"/>
</dbReference>
<dbReference type="InterPro" id="IPR039420">
    <property type="entry name" value="WalR-like"/>
</dbReference>
<dbReference type="InterPro" id="IPR036388">
    <property type="entry name" value="WH-like_DNA-bd_sf"/>
</dbReference>
<dbReference type="NCBIfam" id="NF007005">
    <property type="entry name" value="PRK09468.1"/>
    <property type="match status" value="1"/>
</dbReference>
<dbReference type="PANTHER" id="PTHR48111:SF4">
    <property type="entry name" value="DNA-BINDING DUAL TRANSCRIPTIONAL REGULATOR OMPR"/>
    <property type="match status" value="1"/>
</dbReference>
<dbReference type="PANTHER" id="PTHR48111">
    <property type="entry name" value="REGULATOR OF RPOS"/>
    <property type="match status" value="1"/>
</dbReference>
<dbReference type="Pfam" id="PF00072">
    <property type="entry name" value="Response_reg"/>
    <property type="match status" value="1"/>
</dbReference>
<dbReference type="Pfam" id="PF00486">
    <property type="entry name" value="Trans_reg_C"/>
    <property type="match status" value="1"/>
</dbReference>
<dbReference type="SMART" id="SM00448">
    <property type="entry name" value="REC"/>
    <property type="match status" value="1"/>
</dbReference>
<dbReference type="SMART" id="SM00862">
    <property type="entry name" value="Trans_reg_C"/>
    <property type="match status" value="1"/>
</dbReference>
<dbReference type="SUPFAM" id="SSF46894">
    <property type="entry name" value="C-terminal effector domain of the bipartite response regulators"/>
    <property type="match status" value="1"/>
</dbReference>
<dbReference type="SUPFAM" id="SSF52172">
    <property type="entry name" value="CheY-like"/>
    <property type="match status" value="1"/>
</dbReference>
<dbReference type="PROSITE" id="PS51755">
    <property type="entry name" value="OMPR_PHOB"/>
    <property type="match status" value="1"/>
</dbReference>
<dbReference type="PROSITE" id="PS50110">
    <property type="entry name" value="RESPONSE_REGULATORY"/>
    <property type="match status" value="1"/>
</dbReference>
<protein>
    <recommendedName>
        <fullName evidence="19">DNA-binding dual transcriptional regulator OmpR</fullName>
    </recommendedName>
    <alternativeName>
        <fullName evidence="19">Transcriptional regulatory protein OmpR</fullName>
    </alternativeName>
</protein>